<comment type="function">
    <text evidence="1">Catalyzes the dehydration of methylthioribulose-1-phosphate (MTRu-1-P) into 2,3-diketo-5-methylthiopentyl-1-phosphate (DK-MTP-1-P).</text>
</comment>
<comment type="catalytic activity">
    <reaction evidence="1">
        <text>5-(methylsulfanyl)-D-ribulose 1-phosphate = 5-methylsulfanyl-2,3-dioxopentyl phosphate + H2O</text>
        <dbReference type="Rhea" id="RHEA:15549"/>
        <dbReference type="ChEBI" id="CHEBI:15377"/>
        <dbReference type="ChEBI" id="CHEBI:58548"/>
        <dbReference type="ChEBI" id="CHEBI:58828"/>
        <dbReference type="EC" id="4.2.1.109"/>
    </reaction>
</comment>
<comment type="cofactor">
    <cofactor evidence="1">
        <name>Zn(2+)</name>
        <dbReference type="ChEBI" id="CHEBI:29105"/>
    </cofactor>
    <text evidence="1">Binds 1 zinc ion per subunit.</text>
</comment>
<comment type="pathway">
    <text evidence="1">Amino-acid biosynthesis; L-methionine biosynthesis via salvage pathway; L-methionine from S-methyl-5-thio-alpha-D-ribose 1-phosphate: step 2/6.</text>
</comment>
<comment type="similarity">
    <text evidence="1">Belongs to the aldolase class II family. MtnB subfamily.</text>
</comment>
<sequence>MTENQQLTALLAACHWIGEKGWCPATGGNMSVRLDDAQCLITESGKDKGSLQAEDFLLVEIATNHVPSGRTPSAETGLHTLLYRREPTIGAVLHTHSVNATVLSRVEKGAELVLHGYEMQKSLAGQTTHLDRVAIPIFDNDQDIPALAQRVTEYASHTPLRYGFLVRGHGLYCWGATVKEARRHLEGLEFLFQCELQRRLLEAKA</sequence>
<reference key="1">
    <citation type="submission" date="2009-07" db="EMBL/GenBank/DDBJ databases">
        <title>Complete sequence of Pectobacterium carotovorum subsp. carotovorum PC1.</title>
        <authorList>
            <consortium name="US DOE Joint Genome Institute"/>
            <person name="Lucas S."/>
            <person name="Copeland A."/>
            <person name="Lapidus A."/>
            <person name="Glavina del Rio T."/>
            <person name="Tice H."/>
            <person name="Bruce D."/>
            <person name="Goodwin L."/>
            <person name="Pitluck S."/>
            <person name="Munk A.C."/>
            <person name="Brettin T."/>
            <person name="Detter J.C."/>
            <person name="Han C."/>
            <person name="Tapia R."/>
            <person name="Larimer F."/>
            <person name="Land M."/>
            <person name="Hauser L."/>
            <person name="Kyrpides N."/>
            <person name="Mikhailova N."/>
            <person name="Balakrishnan V."/>
            <person name="Glasner J."/>
            <person name="Perna N.T."/>
        </authorList>
    </citation>
    <scope>NUCLEOTIDE SEQUENCE [LARGE SCALE GENOMIC DNA]</scope>
    <source>
        <strain>PC1</strain>
    </source>
</reference>
<proteinExistence type="inferred from homology"/>
<gene>
    <name evidence="1" type="primary">mtnB</name>
    <name type="ordered locus">PC1_3303</name>
</gene>
<protein>
    <recommendedName>
        <fullName evidence="1">Methylthioribulose-1-phosphate dehydratase</fullName>
        <shortName evidence="1">MTRu-1-P dehydratase</shortName>
        <ecNumber evidence="1">4.2.1.109</ecNumber>
    </recommendedName>
</protein>
<feature type="chain" id="PRO_1000215893" description="Methylthioribulose-1-phosphate dehydratase">
    <location>
        <begin position="1"/>
        <end position="205"/>
    </location>
</feature>
<feature type="binding site" evidence="1">
    <location>
        <position position="94"/>
    </location>
    <ligand>
        <name>Zn(2+)</name>
        <dbReference type="ChEBI" id="CHEBI:29105"/>
    </ligand>
</feature>
<feature type="binding site" evidence="1">
    <location>
        <position position="96"/>
    </location>
    <ligand>
        <name>Zn(2+)</name>
        <dbReference type="ChEBI" id="CHEBI:29105"/>
    </ligand>
</feature>
<keyword id="KW-0028">Amino-acid biosynthesis</keyword>
<keyword id="KW-0456">Lyase</keyword>
<keyword id="KW-0479">Metal-binding</keyword>
<keyword id="KW-0486">Methionine biosynthesis</keyword>
<keyword id="KW-0862">Zinc</keyword>
<evidence type="ECO:0000255" key="1">
    <source>
        <dbReference type="HAMAP-Rule" id="MF_01677"/>
    </source>
</evidence>
<accession>C6DCZ4</accession>
<name>MTNB_PECCP</name>
<organism>
    <name type="scientific">Pectobacterium carotovorum subsp. carotovorum (strain PC1)</name>
    <dbReference type="NCBI Taxonomy" id="561230"/>
    <lineage>
        <taxon>Bacteria</taxon>
        <taxon>Pseudomonadati</taxon>
        <taxon>Pseudomonadota</taxon>
        <taxon>Gammaproteobacteria</taxon>
        <taxon>Enterobacterales</taxon>
        <taxon>Pectobacteriaceae</taxon>
        <taxon>Pectobacterium</taxon>
    </lineage>
</organism>
<dbReference type="EC" id="4.2.1.109" evidence="1"/>
<dbReference type="EMBL" id="CP001657">
    <property type="protein sequence ID" value="ACT14319.1"/>
    <property type="molecule type" value="Genomic_DNA"/>
</dbReference>
<dbReference type="RefSeq" id="WP_014916420.1">
    <property type="nucleotide sequence ID" value="NC_012917.1"/>
</dbReference>
<dbReference type="SMR" id="C6DCZ4"/>
<dbReference type="STRING" id="561230.PC1_3303"/>
<dbReference type="KEGG" id="pct:PC1_3303"/>
<dbReference type="eggNOG" id="COG0235">
    <property type="taxonomic scope" value="Bacteria"/>
</dbReference>
<dbReference type="HOGENOM" id="CLU_006033_4_1_6"/>
<dbReference type="OrthoDB" id="9805559at2"/>
<dbReference type="UniPathway" id="UPA00904">
    <property type="reaction ID" value="UER00875"/>
</dbReference>
<dbReference type="Proteomes" id="UP000002736">
    <property type="component" value="Chromosome"/>
</dbReference>
<dbReference type="GO" id="GO:0005737">
    <property type="term" value="C:cytoplasm"/>
    <property type="evidence" value="ECO:0007669"/>
    <property type="project" value="InterPro"/>
</dbReference>
<dbReference type="GO" id="GO:0046570">
    <property type="term" value="F:methylthioribulose 1-phosphate dehydratase activity"/>
    <property type="evidence" value="ECO:0007669"/>
    <property type="project" value="UniProtKB-UniRule"/>
</dbReference>
<dbReference type="GO" id="GO:0008270">
    <property type="term" value="F:zinc ion binding"/>
    <property type="evidence" value="ECO:0007669"/>
    <property type="project" value="UniProtKB-UniRule"/>
</dbReference>
<dbReference type="GO" id="GO:0019509">
    <property type="term" value="P:L-methionine salvage from methylthioadenosine"/>
    <property type="evidence" value="ECO:0007669"/>
    <property type="project" value="UniProtKB-UniRule"/>
</dbReference>
<dbReference type="GO" id="GO:0005996">
    <property type="term" value="P:monosaccharide metabolic process"/>
    <property type="evidence" value="ECO:0007669"/>
    <property type="project" value="UniProtKB-ARBA"/>
</dbReference>
<dbReference type="Gene3D" id="3.40.225.10">
    <property type="entry name" value="Class II aldolase/adducin N-terminal domain"/>
    <property type="match status" value="1"/>
</dbReference>
<dbReference type="HAMAP" id="MF_01677">
    <property type="entry name" value="Salvage_MtnB"/>
    <property type="match status" value="1"/>
</dbReference>
<dbReference type="InterPro" id="IPR001303">
    <property type="entry name" value="Aldolase_II/adducin_N"/>
</dbReference>
<dbReference type="InterPro" id="IPR036409">
    <property type="entry name" value="Aldolase_II/adducin_N_sf"/>
</dbReference>
<dbReference type="InterPro" id="IPR017714">
    <property type="entry name" value="MethylthioRu-1-P_deHdtase_MtnB"/>
</dbReference>
<dbReference type="NCBIfam" id="NF006672">
    <property type="entry name" value="PRK09220.1"/>
    <property type="match status" value="1"/>
</dbReference>
<dbReference type="NCBIfam" id="TIGR03328">
    <property type="entry name" value="salvage_mtnB"/>
    <property type="match status" value="1"/>
</dbReference>
<dbReference type="PANTHER" id="PTHR10640">
    <property type="entry name" value="METHYLTHIORIBULOSE-1-PHOSPHATE DEHYDRATASE"/>
    <property type="match status" value="1"/>
</dbReference>
<dbReference type="PANTHER" id="PTHR10640:SF7">
    <property type="entry name" value="METHYLTHIORIBULOSE-1-PHOSPHATE DEHYDRATASE"/>
    <property type="match status" value="1"/>
</dbReference>
<dbReference type="Pfam" id="PF00596">
    <property type="entry name" value="Aldolase_II"/>
    <property type="match status" value="1"/>
</dbReference>
<dbReference type="SMART" id="SM01007">
    <property type="entry name" value="Aldolase_II"/>
    <property type="match status" value="1"/>
</dbReference>
<dbReference type="SUPFAM" id="SSF53639">
    <property type="entry name" value="AraD/HMP-PK domain-like"/>
    <property type="match status" value="1"/>
</dbReference>